<keyword id="KW-0002">3D-structure</keyword>
<keyword id="KW-0226">DNA condensation</keyword>
<keyword id="KW-1035">Host cytoplasm</keyword>
<keyword id="KW-1048">Host nucleus</keyword>
<keyword id="KW-0946">Virion</keyword>
<gene>
    <name evidence="4" type="ORF">MEL_368</name>
</gene>
<name>H4H3_MELV</name>
<reference key="1">
    <citation type="journal article" date="2014" name="J. Virol.">
        <title>Genome analysis of the first Marseilleviridae representative from Australia indicates that most of its genes contribute to virus fitness.</title>
        <authorList>
            <person name="Doutre G."/>
            <person name="Philippe N."/>
            <person name="Abergel C."/>
            <person name="Claverie J.M."/>
        </authorList>
    </citation>
    <scope>NUCLEOTIDE SEQUENCE [LARGE SCALE GENOMIC DNA]</scope>
</reference>
<reference key="2">
    <citation type="journal article" date="2021" name="Cell">
        <title>Virus-encoded histone doublets are essential and form nucleosome-like structures.</title>
        <authorList>
            <person name="Liu Y."/>
            <person name="Bisio H."/>
            <person name="Toner C.M."/>
            <person name="Jeudy S."/>
            <person name="Philippe N."/>
            <person name="Zhou K."/>
            <person name="Bowerman S."/>
            <person name="White A."/>
            <person name="Edwards G."/>
            <person name="Abergel C."/>
            <person name="Luger K."/>
        </authorList>
    </citation>
    <scope>FUNCTION</scope>
    <scope>SUBCELLULAR LOCATION</scope>
    <scope>INDUCTION</scope>
    <scope>DOMAIN</scope>
</reference>
<proteinExistence type="evidence at protein level"/>
<organism>
    <name type="scientific">Melbournevirus</name>
    <name type="common">MelV</name>
    <dbReference type="NCBI Taxonomy" id="1560514"/>
    <lineage>
        <taxon>Viruses</taxon>
        <taxon>Varidnaviria</taxon>
        <taxon>Bamfordvirae</taxon>
        <taxon>Nucleocytoviricota</taxon>
        <taxon>Megaviricetes</taxon>
        <taxon>Pimascovirales</taxon>
        <taxon>Marseilleviridae</taxon>
        <taxon>Marseillevirus</taxon>
    </lineage>
</organism>
<dbReference type="EMBL" id="KM275475">
    <property type="protein sequence ID" value="AIT54981.1"/>
    <property type="molecule type" value="Genomic_DNA"/>
</dbReference>
<dbReference type="RefSeq" id="YP_009094869.1">
    <property type="nucleotide sequence ID" value="NC_025412.1"/>
</dbReference>
<dbReference type="PDB" id="7N8N">
    <property type="method" value="EM"/>
    <property type="resolution" value="3.89 A"/>
    <property type="chains" value="A/C=2-216"/>
</dbReference>
<dbReference type="PDBsum" id="7N8N"/>
<dbReference type="EMDB" id="EMD-24238"/>
<dbReference type="SMR" id="A0A097I2D0"/>
<dbReference type="GeneID" id="21012389"/>
<dbReference type="KEGG" id="vg:21012389"/>
<dbReference type="Proteomes" id="UP000207668">
    <property type="component" value="Genome"/>
</dbReference>
<dbReference type="GO" id="GO:0030430">
    <property type="term" value="C:host cell cytoplasm"/>
    <property type="evidence" value="ECO:0007669"/>
    <property type="project" value="UniProtKB-SubCell"/>
</dbReference>
<dbReference type="GO" id="GO:0042025">
    <property type="term" value="C:host cell nucleus"/>
    <property type="evidence" value="ECO:0007669"/>
    <property type="project" value="UniProtKB-SubCell"/>
</dbReference>
<dbReference type="GO" id="GO:0044423">
    <property type="term" value="C:virion component"/>
    <property type="evidence" value="ECO:0007669"/>
    <property type="project" value="UniProtKB-KW"/>
</dbReference>
<dbReference type="GO" id="GO:0003677">
    <property type="term" value="F:DNA binding"/>
    <property type="evidence" value="ECO:0007669"/>
    <property type="project" value="InterPro"/>
</dbReference>
<dbReference type="GO" id="GO:0046982">
    <property type="term" value="F:protein heterodimerization activity"/>
    <property type="evidence" value="ECO:0007669"/>
    <property type="project" value="InterPro"/>
</dbReference>
<dbReference type="GO" id="GO:0030527">
    <property type="term" value="F:structural constituent of chromatin"/>
    <property type="evidence" value="ECO:0007669"/>
    <property type="project" value="InterPro"/>
</dbReference>
<dbReference type="GO" id="GO:0030261">
    <property type="term" value="P:chromosome condensation"/>
    <property type="evidence" value="ECO:0007669"/>
    <property type="project" value="UniProtKB-KW"/>
</dbReference>
<dbReference type="Gene3D" id="1.10.20.10">
    <property type="entry name" value="Histone, subunit A"/>
    <property type="match status" value="2"/>
</dbReference>
<dbReference type="InterPro" id="IPR009072">
    <property type="entry name" value="Histone-fold"/>
</dbReference>
<dbReference type="InterPro" id="IPR007125">
    <property type="entry name" value="Histone_H2A/H2B/H3"/>
</dbReference>
<dbReference type="InterPro" id="IPR000164">
    <property type="entry name" value="Histone_H3/CENP-A"/>
</dbReference>
<dbReference type="PANTHER" id="PTHR11426">
    <property type="entry name" value="HISTONE H3"/>
    <property type="match status" value="1"/>
</dbReference>
<dbReference type="Pfam" id="PF00125">
    <property type="entry name" value="Histone"/>
    <property type="match status" value="1"/>
</dbReference>
<dbReference type="SUPFAM" id="SSF47113">
    <property type="entry name" value="Histone-fold"/>
    <property type="match status" value="2"/>
</dbReference>
<sequence>MSKAGKKVKAQQHGHLADHVSVGETQIPKASTQHLLRKAGSLSAAGDTEVPIRGFVHMKLHKLVQKSLLAMQLAKRKTIMKSDVKKAAELMHLPVFAIPTKDSGAKGSVFLSCRQKGAGSAGTGSETNSQEVRSQMKSTCLIIPKERFRTMAKEISKKEGHDVHIAEAALDMLQVIVESCTVRLLEKALVITYSGKRTRVTSKDIETAFMLEHGPL</sequence>
<comment type="function">
    <text evidence="2">Histone-like protein that is recruited to viral factories during viral replication and participates in viral DNA packaging and virion production probably by forming unstable nucleosome-like particles (PubMed:34297924). May compact the viral DNA (PubMed:34297924).</text>
</comment>
<comment type="subcellular location">
    <subcellularLocation>
        <location evidence="2">Host nucleus</location>
    </subcellularLocation>
    <subcellularLocation>
        <location evidence="2">Host cytoplasm</location>
    </subcellularLocation>
    <subcellularLocation>
        <location evidence="2">Virion</location>
    </subcellularLocation>
    <text evidence="2">Localize to cytoplasmic viral factories after virus infection (PubMed:34297924). Also present in the nucleus but at much lower concentration (PubMed:34297924). The viral histones that localize in the nucleus apparently do not interact with host genomic DNA and can leave the nucleus to associate with the viral factory (PubMed:34297924).</text>
</comment>
<comment type="induction">
    <text evidence="2">Expression of viral histones begins 2-4 hpi and continues along the infectious cycle.</text>
</comment>
<comment type="domain">
    <text evidence="2">The N-terminus is similar to eukaryotic H4, whereas the C-terminus is similar to eukaryotic H3.</text>
</comment>
<protein>
    <recommendedName>
        <fullName evidence="3">Histone doublet H4-H3</fullName>
    </recommendedName>
    <alternativeName>
        <fullName evidence="3">Histone H4-H3 fusion protein</fullName>
    </alternativeName>
    <alternativeName>
        <fullName evidence="3">MV-H4-H3</fullName>
    </alternativeName>
</protein>
<accession>A0A097I2D0</accession>
<feature type="chain" id="PRO_0000454838" description="Histone doublet H4-H3">
    <location>
        <begin position="1"/>
        <end position="216"/>
    </location>
</feature>
<feature type="region of interest" description="Disordered" evidence="1">
    <location>
        <begin position="1"/>
        <end position="23"/>
    </location>
</feature>
<feature type="compositionally biased region" description="Basic residues" evidence="1">
    <location>
        <begin position="1"/>
        <end position="12"/>
    </location>
</feature>
<evidence type="ECO:0000256" key="1">
    <source>
        <dbReference type="SAM" id="MobiDB-lite"/>
    </source>
</evidence>
<evidence type="ECO:0000269" key="2">
    <source>
    </source>
</evidence>
<evidence type="ECO:0000303" key="3">
    <source>
    </source>
</evidence>
<evidence type="ECO:0000312" key="4">
    <source>
        <dbReference type="EMBL" id="AIT54981.1"/>
    </source>
</evidence>